<name>VRTI_PENAE</name>
<evidence type="ECO:0000255" key="1">
    <source>
        <dbReference type="PROSITE-ProRule" id="PRU00805"/>
    </source>
</evidence>
<evidence type="ECO:0000269" key="2">
    <source>
    </source>
</evidence>
<evidence type="ECO:0000269" key="3">
    <source>
    </source>
</evidence>
<evidence type="ECO:0000269" key="4">
    <source>
    </source>
</evidence>
<evidence type="ECO:0000269" key="5">
    <source>
    </source>
</evidence>
<evidence type="ECO:0000303" key="6">
    <source>
    </source>
</evidence>
<evidence type="ECO:0000305" key="7"/>
<evidence type="ECO:0000305" key="8">
    <source>
    </source>
</evidence>
<reference key="1">
    <citation type="journal article" date="2010" name="Chem. Biol.">
        <title>Identification of the viridicatumtoxin and griseofulvin gene clusters from Penicillium aethiopicum.</title>
        <authorList>
            <person name="Chooi Y.H."/>
            <person name="Cacho R."/>
            <person name="Tang Y."/>
        </authorList>
    </citation>
    <scope>NUCLEOTIDE SEQUENCE [GENOMIC DNA]</scope>
    <scope>FUNCTION</scope>
    <source>
        <strain>IBT 5753</strain>
    </source>
</reference>
<reference key="2">
    <citation type="journal article" date="2008" name="J. Antibiot.">
        <title>Viridicatumtoxin B, a new anti-MRSA agent from Penicillium sp. FR11.</title>
        <authorList>
            <person name="Zheng C.J."/>
            <person name="Yu H.E."/>
            <person name="Kim E.H."/>
            <person name="Kim W.G."/>
        </authorList>
    </citation>
    <scope>BIOTECHNOLOGY</scope>
</reference>
<reference key="3">
    <citation type="journal article" date="2013" name="J. Am. Chem. Soc.">
        <title>A cytochrome P450 serves as an unexpected terpene cyclase during fungal meroterpenoid biosynthesis.</title>
        <authorList>
            <person name="Chooi Y.H."/>
            <person name="Hong Y.J."/>
            <person name="Cacho R.A."/>
            <person name="Tantillo D.J."/>
            <person name="Tang Y."/>
        </authorList>
    </citation>
    <scope>FUNCTION</scope>
</reference>
<reference key="4">
    <citation type="journal article" date="2016" name="J. Antibiot.">
        <title>Inhibition of bacterial undecaprenyl pyrophosphate synthase by small fungal molecules.</title>
        <authorList>
            <person name="Inokoshi J."/>
            <person name="Nakamura Y."/>
            <person name="Komada S."/>
            <person name="Komatsu K."/>
            <person name="Umeyama H."/>
            <person name="Tomoda H."/>
        </authorList>
    </citation>
    <scope>BIOTECHNOLOGY</scope>
</reference>
<keyword id="KW-0408">Iron</keyword>
<keyword id="KW-0479">Metal-binding</keyword>
<keyword id="KW-0560">Oxidoreductase</keyword>
<gene>
    <name evidence="6" type="primary">vrtI</name>
</gene>
<organism>
    <name type="scientific">Penicillium aethiopicum</name>
    <dbReference type="NCBI Taxonomy" id="36650"/>
    <lineage>
        <taxon>Eukaryota</taxon>
        <taxon>Fungi</taxon>
        <taxon>Dikarya</taxon>
        <taxon>Ascomycota</taxon>
        <taxon>Pezizomycotina</taxon>
        <taxon>Eurotiomycetes</taxon>
        <taxon>Eurotiomycetidae</taxon>
        <taxon>Eurotiales</taxon>
        <taxon>Aspergillaceae</taxon>
        <taxon>Penicillium</taxon>
    </lineage>
</organism>
<dbReference type="EC" id="1.14.-.-" evidence="8"/>
<dbReference type="EMBL" id="GU574477">
    <property type="protein sequence ID" value="ADI24935.1"/>
    <property type="molecule type" value="Genomic_DNA"/>
</dbReference>
<dbReference type="SMR" id="D7PHZ1"/>
<dbReference type="UniPathway" id="UPA00213"/>
<dbReference type="GO" id="GO:0046872">
    <property type="term" value="F:metal ion binding"/>
    <property type="evidence" value="ECO:0007669"/>
    <property type="project" value="UniProtKB-KW"/>
</dbReference>
<dbReference type="GO" id="GO:0016491">
    <property type="term" value="F:oxidoreductase activity"/>
    <property type="evidence" value="ECO:0007669"/>
    <property type="project" value="UniProtKB-KW"/>
</dbReference>
<dbReference type="GO" id="GO:0016114">
    <property type="term" value="P:terpenoid biosynthetic process"/>
    <property type="evidence" value="ECO:0007669"/>
    <property type="project" value="UniProtKB-UniPathway"/>
</dbReference>
<dbReference type="GO" id="GO:0140872">
    <property type="term" value="P:viridicatumtoxin biosynthetic process"/>
    <property type="evidence" value="ECO:0000304"/>
    <property type="project" value="GO_Central"/>
</dbReference>
<dbReference type="Gene3D" id="2.60.120.330">
    <property type="entry name" value="B-lactam Antibiotic, Isopenicillin N Synthase, Chain"/>
    <property type="match status" value="1"/>
</dbReference>
<dbReference type="InterPro" id="IPR026992">
    <property type="entry name" value="DIOX_N"/>
</dbReference>
<dbReference type="InterPro" id="IPR044861">
    <property type="entry name" value="IPNS-like_FE2OG_OXY"/>
</dbReference>
<dbReference type="InterPro" id="IPR027443">
    <property type="entry name" value="IPNS-like_sf"/>
</dbReference>
<dbReference type="InterPro" id="IPR050231">
    <property type="entry name" value="Iron_ascorbate_oxido_reductase"/>
</dbReference>
<dbReference type="InterPro" id="IPR005123">
    <property type="entry name" value="Oxoglu/Fe-dep_dioxygenase_dom"/>
</dbReference>
<dbReference type="PANTHER" id="PTHR47990">
    <property type="entry name" value="2-OXOGLUTARATE (2OG) AND FE(II)-DEPENDENT OXYGENASE SUPERFAMILY PROTEIN-RELATED"/>
    <property type="match status" value="1"/>
</dbReference>
<dbReference type="Pfam" id="PF03171">
    <property type="entry name" value="2OG-FeII_Oxy"/>
    <property type="match status" value="1"/>
</dbReference>
<dbReference type="Pfam" id="PF14226">
    <property type="entry name" value="DIOX_N"/>
    <property type="match status" value="1"/>
</dbReference>
<dbReference type="SUPFAM" id="SSF51197">
    <property type="entry name" value="Clavaminate synthase-like"/>
    <property type="match status" value="1"/>
</dbReference>
<dbReference type="PROSITE" id="PS51471">
    <property type="entry name" value="FE2OG_OXY"/>
    <property type="match status" value="1"/>
</dbReference>
<sequence length="413" mass="46628">MGARSKEARHRWFSRLPPDASSSFLPCKRPKSVAFVLWIRPSCFLRESLPAELSGLPGLPLPPQAPTNTMNCGLPEAALSVIDWGRLKSGDVNEGARLLSACDDQGFFYLDLSSEPSFLHDHKSVLHFMDQYFHQGLADKMKDDRQSDTHGYEPVATSTGALNTLPDYYESLKASRDELHGDGRNLAPAVCDRQDLFLRFSDMMHQMVIAILQELDCQLGFGGDRASFQDFHRKDAESLTTLSMFRYPKQETLDLGVGHNKHTDIGTLTFLLCDQWGLQVLSKDPAGWRFVAPREGHAVINVGDTLRFLSGNRFRSAVHRVIPTQRLQHEDRYSIAYFLRAANDTQFTDSAGRQVSAKQWHDEKFDVFRETHEEQEKMPILTGGMERLENLPGIWCGVRLTDGICHRLGAEDC</sequence>
<feature type="chain" id="PRO_0000436821" description="Oxidoreductase vrtI">
    <location>
        <begin position="1"/>
        <end position="413"/>
    </location>
</feature>
<feature type="domain" description="Fe2OG dioxygenase" evidence="1">
    <location>
        <begin position="235"/>
        <end position="341"/>
    </location>
</feature>
<feature type="binding site" evidence="1">
    <location>
        <position position="262"/>
    </location>
    <ligand>
        <name>Fe cation</name>
        <dbReference type="ChEBI" id="CHEBI:24875"/>
    </ligand>
</feature>
<feature type="binding site" evidence="1">
    <location>
        <position position="264"/>
    </location>
    <ligand>
        <name>Fe cation</name>
        <dbReference type="ChEBI" id="CHEBI:24875"/>
    </ligand>
</feature>
<feature type="binding site" evidence="1">
    <location>
        <position position="319"/>
    </location>
    <ligand>
        <name>Fe cation</name>
        <dbReference type="ChEBI" id="CHEBI:24875"/>
    </ligand>
</feature>
<feature type="binding site" evidence="1">
    <location>
        <position position="332"/>
    </location>
    <ligand>
        <name>2-oxoglutarate</name>
        <dbReference type="ChEBI" id="CHEBI:16810"/>
    </ligand>
</feature>
<proteinExistence type="evidence at protein level"/>
<accession>D7PHZ1</accession>
<comment type="function">
    <text evidence="3 4">Oxidoreductase; part of the gene cluster that mediates the biosynthesis of viridicatumtoxin, a tetracycline-like fungal meroterpenoid with a unique, fused spirobicyclic ring system (PubMed:20534346). The first step of the pathway is the production of the malonamoyl-CoA starter unit for the polyketide synthase vrtA (PubMed:20534346). The aldolase vrtJ may be involved in the synthesis of the malonamate substrate for malonamoyl-CoA synthetase vrtB (PubMed:20534346). The polyketide synthase vrtA then may utilize the malonamoyl-CoA starter unit, followed by sequential condensation of eight malonyl-CoA units to form the polyketide backbone (PubMed:20534346). The cyclization of the last ring could be mediated by the lactamase-like protein vrtG (PubMed:20534346). The proposed post-PKS tailoring steps are a hydroxylation at C5 catalyzed the cytochrome P450 monooxygenase vrtE, a hydroxylation at C12a catalyzed by VrtH and/or VrtI, and an O-methylation by the O-methyltransferase vrtF (PubMed:20534346, PubMed:24161266). VrtC is then proposed to catalyze the transfer of a geranyl group synthesized by vrtD to the aromatic C ring of the tetracyclic polyketide intermediate of viridicatumtoxin to yield previridicatumtoxin (PubMed:20534346). Finally, the cytochrome P450 monooxygenase vrtK catalyzes the spirocyclization of the geranyl moiety of previridicatumtoxin to afford viridicatumtoxin (PubMed:24161266).</text>
</comment>
<comment type="pathway">
    <text evidence="3">Secondary metabolite biosynthesis; terpenoid biosynthesis.</text>
</comment>
<comment type="biotechnology">
    <text evidence="2 5">Viridicatumtoxin and its derivative, viridicatumtoxin B, exhibit anti-methicillin-resistant Staphylococcus aureus (anti-MRSA) activity (PubMed:19168978). Moreover, viridicatumtoxin and a C2 acetyl analog, spirohexaline, have been demonstrated to inhibit bacterial undecaprenyl diphosphate synthase, a potential new target for antibiotic development (PubMed:27049441).</text>
</comment>
<comment type="similarity">
    <text evidence="7">Belongs to the iron/ascorbate-dependent oxidoreductase family.</text>
</comment>
<protein>
    <recommendedName>
        <fullName evidence="6">Oxidoreductase vrtI</fullName>
        <ecNumber evidence="8">1.14.-.-</ecNumber>
    </recommendedName>
    <alternativeName>
        <fullName evidence="6">Viridicatumtoxin synthesis protein I</fullName>
    </alternativeName>
</protein>